<reference key="1">
    <citation type="journal article" date="2009" name="PLoS Genet.">
        <title>Organised genome dynamics in the Escherichia coli species results in highly diverse adaptive paths.</title>
        <authorList>
            <person name="Touchon M."/>
            <person name="Hoede C."/>
            <person name="Tenaillon O."/>
            <person name="Barbe V."/>
            <person name="Baeriswyl S."/>
            <person name="Bidet P."/>
            <person name="Bingen E."/>
            <person name="Bonacorsi S."/>
            <person name="Bouchier C."/>
            <person name="Bouvet O."/>
            <person name="Calteau A."/>
            <person name="Chiapello H."/>
            <person name="Clermont O."/>
            <person name="Cruveiller S."/>
            <person name="Danchin A."/>
            <person name="Diard M."/>
            <person name="Dossat C."/>
            <person name="Karoui M.E."/>
            <person name="Frapy E."/>
            <person name="Garry L."/>
            <person name="Ghigo J.M."/>
            <person name="Gilles A.M."/>
            <person name="Johnson J."/>
            <person name="Le Bouguenec C."/>
            <person name="Lescat M."/>
            <person name="Mangenot S."/>
            <person name="Martinez-Jehanne V."/>
            <person name="Matic I."/>
            <person name="Nassif X."/>
            <person name="Oztas S."/>
            <person name="Petit M.A."/>
            <person name="Pichon C."/>
            <person name="Rouy Z."/>
            <person name="Ruf C.S."/>
            <person name="Schneider D."/>
            <person name="Tourret J."/>
            <person name="Vacherie B."/>
            <person name="Vallenet D."/>
            <person name="Medigue C."/>
            <person name="Rocha E.P.C."/>
            <person name="Denamur E."/>
        </authorList>
    </citation>
    <scope>NUCLEOTIDE SEQUENCE [LARGE SCALE GENOMIC DNA]</scope>
    <source>
        <strain>UMN026 / ExPEC</strain>
    </source>
</reference>
<name>TYPH_ECOLU</name>
<organism>
    <name type="scientific">Escherichia coli O17:K52:H18 (strain UMN026 / ExPEC)</name>
    <dbReference type="NCBI Taxonomy" id="585056"/>
    <lineage>
        <taxon>Bacteria</taxon>
        <taxon>Pseudomonadati</taxon>
        <taxon>Pseudomonadota</taxon>
        <taxon>Gammaproteobacteria</taxon>
        <taxon>Enterobacterales</taxon>
        <taxon>Enterobacteriaceae</taxon>
        <taxon>Escherichia</taxon>
    </lineage>
</organism>
<proteinExistence type="inferred from homology"/>
<protein>
    <recommendedName>
        <fullName evidence="1">Thymidine phosphorylase</fullName>
        <ecNumber evidence="1">2.4.2.4</ecNumber>
    </recommendedName>
    <alternativeName>
        <fullName evidence="1">TdRPase</fullName>
    </alternativeName>
</protein>
<sequence length="440" mass="47180">MFLAQEIIRKKRDGHALSDEEIRFFINGIRDNTISEGQIAALAMTIFFHDMTMPERVSLTMAMRDSGTVLDWKSLHLNGPIVDKHSTGGVGDVTSLMLGPMVAACGGYIPMISGRGLGHTGGTLDKLESIPGFDIFPDDNRFREIIKDVGVAIIGQTSSLAPADKRFYATRDITATVDSIPLITASILAKKLAEGLDALVMDVKVGSGAFMPTYELSEALAEAIVGVANGAGVRTTALLTDMNQVLASSAGNAVEVREAVQFLTGEYRNPRLFDVTMALCVEMLISGKLAKDDAEARAKLQAVLDNGKAAEVFGRMVAAQKGPTDFVENYAKYLPTAMLTKAVYADTEGFVSEMDTRALGMAVVAMGGGRRQASDTIDYSVGFTDMARLGDQVDGQRPLAVIHAKDENSWQEAAKAVKAAIKLADKAPESTPTVYRRISE</sequence>
<accession>B7NH50</accession>
<comment type="function">
    <text evidence="1">The enzymes which catalyze the reversible phosphorolysis of pyrimidine nucleosides are involved in the degradation of these compounds and in their utilization as carbon and energy sources, or in the rescue of pyrimidine bases for nucleotide synthesis.</text>
</comment>
<comment type="catalytic activity">
    <reaction evidence="1">
        <text>thymidine + phosphate = 2-deoxy-alpha-D-ribose 1-phosphate + thymine</text>
        <dbReference type="Rhea" id="RHEA:16037"/>
        <dbReference type="ChEBI" id="CHEBI:17748"/>
        <dbReference type="ChEBI" id="CHEBI:17821"/>
        <dbReference type="ChEBI" id="CHEBI:43474"/>
        <dbReference type="ChEBI" id="CHEBI:57259"/>
        <dbReference type="EC" id="2.4.2.4"/>
    </reaction>
</comment>
<comment type="pathway">
    <text evidence="1">Pyrimidine metabolism; dTMP biosynthesis via salvage pathway; dTMP from thymine: step 1/2.</text>
</comment>
<comment type="subunit">
    <text evidence="1">Homodimer.</text>
</comment>
<comment type="similarity">
    <text evidence="1">Belongs to the thymidine/pyrimidine-nucleoside phosphorylase family.</text>
</comment>
<gene>
    <name evidence="1" type="primary">deoA</name>
    <name type="ordered locus">ECUMN_5006</name>
</gene>
<evidence type="ECO:0000255" key="1">
    <source>
        <dbReference type="HAMAP-Rule" id="MF_01628"/>
    </source>
</evidence>
<dbReference type="EC" id="2.4.2.4" evidence="1"/>
<dbReference type="EMBL" id="CU928163">
    <property type="protein sequence ID" value="CAR16115.1"/>
    <property type="molecule type" value="Genomic_DNA"/>
</dbReference>
<dbReference type="RefSeq" id="WP_000477811.1">
    <property type="nucleotide sequence ID" value="NC_011751.1"/>
</dbReference>
<dbReference type="RefSeq" id="YP_002415579.1">
    <property type="nucleotide sequence ID" value="NC_011751.1"/>
</dbReference>
<dbReference type="SMR" id="B7NH50"/>
<dbReference type="STRING" id="585056.ECUMN_5006"/>
<dbReference type="GeneID" id="93777462"/>
<dbReference type="KEGG" id="eum:ECUMN_5006"/>
<dbReference type="PATRIC" id="fig|585056.7.peg.5171"/>
<dbReference type="HOGENOM" id="CLU_025040_0_1_6"/>
<dbReference type="UniPathway" id="UPA00578">
    <property type="reaction ID" value="UER00638"/>
</dbReference>
<dbReference type="Proteomes" id="UP000007097">
    <property type="component" value="Chromosome"/>
</dbReference>
<dbReference type="GO" id="GO:0005829">
    <property type="term" value="C:cytosol"/>
    <property type="evidence" value="ECO:0007669"/>
    <property type="project" value="TreeGrafter"/>
</dbReference>
<dbReference type="GO" id="GO:0004645">
    <property type="term" value="F:1,4-alpha-oligoglucan phosphorylase activity"/>
    <property type="evidence" value="ECO:0007669"/>
    <property type="project" value="InterPro"/>
</dbReference>
<dbReference type="GO" id="GO:0009032">
    <property type="term" value="F:thymidine phosphorylase activity"/>
    <property type="evidence" value="ECO:0007669"/>
    <property type="project" value="UniProtKB-UniRule"/>
</dbReference>
<dbReference type="GO" id="GO:0006206">
    <property type="term" value="P:pyrimidine nucleobase metabolic process"/>
    <property type="evidence" value="ECO:0007669"/>
    <property type="project" value="InterPro"/>
</dbReference>
<dbReference type="GO" id="GO:0046104">
    <property type="term" value="P:thymidine metabolic process"/>
    <property type="evidence" value="ECO:0007669"/>
    <property type="project" value="UniProtKB-UniRule"/>
</dbReference>
<dbReference type="FunFam" id="3.40.1030.10:FF:000001">
    <property type="entry name" value="Thymidine phosphorylase"/>
    <property type="match status" value="1"/>
</dbReference>
<dbReference type="FunFam" id="3.90.1170.30:FF:000001">
    <property type="entry name" value="Thymidine phosphorylase"/>
    <property type="match status" value="1"/>
</dbReference>
<dbReference type="Gene3D" id="3.40.1030.10">
    <property type="entry name" value="Nucleoside phosphorylase/phosphoribosyltransferase catalytic domain"/>
    <property type="match status" value="1"/>
</dbReference>
<dbReference type="Gene3D" id="3.90.1170.30">
    <property type="entry name" value="Pyrimidine nucleoside phosphorylase-like, C-terminal domain"/>
    <property type="match status" value="1"/>
</dbReference>
<dbReference type="Gene3D" id="1.20.970.10">
    <property type="entry name" value="Transferase, Pyrimidine Nucleoside Phosphorylase, Chain C"/>
    <property type="match status" value="1"/>
</dbReference>
<dbReference type="HAMAP" id="MF_01628">
    <property type="entry name" value="Thymid_phosp"/>
    <property type="match status" value="1"/>
</dbReference>
<dbReference type="InterPro" id="IPR000312">
    <property type="entry name" value="Glycosyl_Trfase_fam3"/>
</dbReference>
<dbReference type="InterPro" id="IPR017459">
    <property type="entry name" value="Glycosyl_Trfase_fam3_N_dom"/>
</dbReference>
<dbReference type="InterPro" id="IPR036320">
    <property type="entry name" value="Glycosyl_Trfase_fam3_N_dom_sf"/>
</dbReference>
<dbReference type="InterPro" id="IPR035902">
    <property type="entry name" value="Nuc_phospho_transferase"/>
</dbReference>
<dbReference type="InterPro" id="IPR036566">
    <property type="entry name" value="PYNP-like_C_sf"/>
</dbReference>
<dbReference type="InterPro" id="IPR013102">
    <property type="entry name" value="PYNP_C"/>
</dbReference>
<dbReference type="InterPro" id="IPR018090">
    <property type="entry name" value="Pyrmidine_PPas_bac/euk"/>
</dbReference>
<dbReference type="InterPro" id="IPR017872">
    <property type="entry name" value="Pyrmidine_PPase_CS"/>
</dbReference>
<dbReference type="InterPro" id="IPR000053">
    <property type="entry name" value="Thymidine/pyrmidine_PPase"/>
</dbReference>
<dbReference type="InterPro" id="IPR013465">
    <property type="entry name" value="Thymidine_Pase"/>
</dbReference>
<dbReference type="NCBIfam" id="NF004490">
    <property type="entry name" value="PRK05820.1"/>
    <property type="match status" value="1"/>
</dbReference>
<dbReference type="NCBIfam" id="TIGR02643">
    <property type="entry name" value="T_phosphoryl"/>
    <property type="match status" value="1"/>
</dbReference>
<dbReference type="NCBIfam" id="TIGR02644">
    <property type="entry name" value="Y_phosphoryl"/>
    <property type="match status" value="1"/>
</dbReference>
<dbReference type="PANTHER" id="PTHR10515">
    <property type="entry name" value="THYMIDINE PHOSPHORYLASE"/>
    <property type="match status" value="1"/>
</dbReference>
<dbReference type="PANTHER" id="PTHR10515:SF0">
    <property type="entry name" value="THYMIDINE PHOSPHORYLASE"/>
    <property type="match status" value="1"/>
</dbReference>
<dbReference type="Pfam" id="PF02885">
    <property type="entry name" value="Glycos_trans_3N"/>
    <property type="match status" value="1"/>
</dbReference>
<dbReference type="Pfam" id="PF00591">
    <property type="entry name" value="Glycos_transf_3"/>
    <property type="match status" value="1"/>
</dbReference>
<dbReference type="Pfam" id="PF07831">
    <property type="entry name" value="PYNP_C"/>
    <property type="match status" value="1"/>
</dbReference>
<dbReference type="PIRSF" id="PIRSF000478">
    <property type="entry name" value="TP_PyNP"/>
    <property type="match status" value="1"/>
</dbReference>
<dbReference type="SMART" id="SM00941">
    <property type="entry name" value="PYNP_C"/>
    <property type="match status" value="1"/>
</dbReference>
<dbReference type="SUPFAM" id="SSF52418">
    <property type="entry name" value="Nucleoside phosphorylase/phosphoribosyltransferase catalytic domain"/>
    <property type="match status" value="1"/>
</dbReference>
<dbReference type="SUPFAM" id="SSF47648">
    <property type="entry name" value="Nucleoside phosphorylase/phosphoribosyltransferase N-terminal domain"/>
    <property type="match status" value="1"/>
</dbReference>
<dbReference type="SUPFAM" id="SSF54680">
    <property type="entry name" value="Pyrimidine nucleoside phosphorylase C-terminal domain"/>
    <property type="match status" value="1"/>
</dbReference>
<dbReference type="PROSITE" id="PS00647">
    <property type="entry name" value="THYMID_PHOSPHORYLASE"/>
    <property type="match status" value="1"/>
</dbReference>
<keyword id="KW-0328">Glycosyltransferase</keyword>
<keyword id="KW-0808">Transferase</keyword>
<feature type="chain" id="PRO_1000186257" description="Thymidine phosphorylase">
    <location>
        <begin position="1"/>
        <end position="440"/>
    </location>
</feature>